<sequence>MSKLYVGSEVGQLRRVLLNRPERALTHLTPSNCHELLFDDVLAVEAAGEEHDAFARTLREQDVEVLLLHDLLVETLAVPEAKQWLLNTQISDFRYGPTFARDLRQYFAEMDDEHLASILLGGLAYSELPIKSSSMLPKMKRPLDFVIEPLPNHLFTRDTSCWVYGGVSLNPMMMPARQRETNHLRAIYRWHPTFAGQDFINYFGDEDQHYDNANVEGGDVLVIGKGAVLIGMSERTTPQGVENLAASLFKSGQAKEVIAIDLPKHRSCMHLDTVMTHMDVDTFSVYPEIMRKDLDTWRLTPKGNGEMHVEASHNYLHAIESALGLDQLKIITTGGDSYEAEREQWNDANNVLTVKPGVVIGYERNVYTNEKYDKAGIEVLTIPGNELGRGRGGARCMSCPIERDDI</sequence>
<accession>A7MSD7</accession>
<proteinExistence type="inferred from homology"/>
<organism>
    <name type="scientific">Vibrio campbellii (strain ATCC BAA-1116)</name>
    <dbReference type="NCBI Taxonomy" id="2902295"/>
    <lineage>
        <taxon>Bacteria</taxon>
        <taxon>Pseudomonadati</taxon>
        <taxon>Pseudomonadota</taxon>
        <taxon>Gammaproteobacteria</taxon>
        <taxon>Vibrionales</taxon>
        <taxon>Vibrionaceae</taxon>
        <taxon>Vibrio</taxon>
    </lineage>
</organism>
<comment type="catalytic activity">
    <reaction evidence="1">
        <text>L-arginine + H2O = L-citrulline + NH4(+)</text>
        <dbReference type="Rhea" id="RHEA:19597"/>
        <dbReference type="ChEBI" id="CHEBI:15377"/>
        <dbReference type="ChEBI" id="CHEBI:28938"/>
        <dbReference type="ChEBI" id="CHEBI:32682"/>
        <dbReference type="ChEBI" id="CHEBI:57743"/>
        <dbReference type="EC" id="3.5.3.6"/>
    </reaction>
</comment>
<comment type="pathway">
    <text evidence="1">Amino-acid degradation; L-arginine degradation via ADI pathway; carbamoyl phosphate from L-arginine: step 1/2.</text>
</comment>
<comment type="subcellular location">
    <subcellularLocation>
        <location evidence="1">Cytoplasm</location>
    </subcellularLocation>
</comment>
<comment type="similarity">
    <text evidence="1">Belongs to the arginine deiminase family.</text>
</comment>
<reference key="1">
    <citation type="submission" date="2007-08" db="EMBL/GenBank/DDBJ databases">
        <authorList>
            <consortium name="The Vibrio harveyi Genome Sequencing Project"/>
            <person name="Bassler B."/>
            <person name="Clifton S.W."/>
            <person name="Fulton L."/>
            <person name="Delehaunty K."/>
            <person name="Fronick C."/>
            <person name="Harrison M."/>
            <person name="Markivic C."/>
            <person name="Fulton R."/>
            <person name="Tin-Wollam A.-M."/>
            <person name="Shah N."/>
            <person name="Pepin K."/>
            <person name="Nash W."/>
            <person name="Thiruvilangam P."/>
            <person name="Bhonagiri V."/>
            <person name="Waters C."/>
            <person name="Tu K.C."/>
            <person name="Irgon J."/>
            <person name="Wilson R.K."/>
        </authorList>
    </citation>
    <scope>NUCLEOTIDE SEQUENCE [LARGE SCALE GENOMIC DNA]</scope>
    <source>
        <strain>ATCC BAA-1116 / BB120</strain>
    </source>
</reference>
<feature type="chain" id="PRO_1000005731" description="Arginine deiminase">
    <location>
        <begin position="1"/>
        <end position="406"/>
    </location>
</feature>
<feature type="active site" description="Amidino-cysteine intermediate" evidence="1">
    <location>
        <position position="396"/>
    </location>
</feature>
<name>ARCA_VIBC1</name>
<evidence type="ECO:0000255" key="1">
    <source>
        <dbReference type="HAMAP-Rule" id="MF_00242"/>
    </source>
</evidence>
<gene>
    <name evidence="1" type="primary">arcA</name>
    <name type="ordered locus">VIBHAR_03644</name>
</gene>
<keyword id="KW-0056">Arginine metabolism</keyword>
<keyword id="KW-0963">Cytoplasm</keyword>
<keyword id="KW-0378">Hydrolase</keyword>
<dbReference type="EC" id="3.5.3.6" evidence="1"/>
<dbReference type="EMBL" id="CP000789">
    <property type="protein sequence ID" value="ABU72558.1"/>
    <property type="molecule type" value="Genomic_DNA"/>
</dbReference>
<dbReference type="RefSeq" id="WP_005432859.1">
    <property type="nucleotide sequence ID" value="NC_022269.1"/>
</dbReference>
<dbReference type="SMR" id="A7MSD7"/>
<dbReference type="GeneID" id="83580519"/>
<dbReference type="KEGG" id="vha:VIBHAR_03644"/>
<dbReference type="PATRIC" id="fig|338187.25.peg.2592"/>
<dbReference type="UniPathway" id="UPA00254">
    <property type="reaction ID" value="UER00364"/>
</dbReference>
<dbReference type="Proteomes" id="UP000008152">
    <property type="component" value="Chromosome I"/>
</dbReference>
<dbReference type="GO" id="GO:0005737">
    <property type="term" value="C:cytoplasm"/>
    <property type="evidence" value="ECO:0007669"/>
    <property type="project" value="UniProtKB-SubCell"/>
</dbReference>
<dbReference type="GO" id="GO:0016990">
    <property type="term" value="F:arginine deiminase activity"/>
    <property type="evidence" value="ECO:0007669"/>
    <property type="project" value="UniProtKB-UniRule"/>
</dbReference>
<dbReference type="GO" id="GO:0019547">
    <property type="term" value="P:arginine catabolic process to ornithine"/>
    <property type="evidence" value="ECO:0007669"/>
    <property type="project" value="UniProtKB-UniRule"/>
</dbReference>
<dbReference type="GO" id="GO:0019546">
    <property type="term" value="P:arginine deiminase pathway"/>
    <property type="evidence" value="ECO:0007669"/>
    <property type="project" value="TreeGrafter"/>
</dbReference>
<dbReference type="FunFam" id="1.10.3930.10:FF:000002">
    <property type="entry name" value="Arginine deiminase"/>
    <property type="match status" value="1"/>
</dbReference>
<dbReference type="Gene3D" id="1.10.3930.10">
    <property type="entry name" value="Arginine deiminase"/>
    <property type="match status" value="1"/>
</dbReference>
<dbReference type="Gene3D" id="3.75.10.10">
    <property type="entry name" value="L-arginine/glycine Amidinotransferase, Chain A"/>
    <property type="match status" value="1"/>
</dbReference>
<dbReference type="HAMAP" id="MF_00242">
    <property type="entry name" value="Arg_deiminase"/>
    <property type="match status" value="1"/>
</dbReference>
<dbReference type="InterPro" id="IPR003876">
    <property type="entry name" value="Arg_deiminase"/>
</dbReference>
<dbReference type="NCBIfam" id="TIGR01078">
    <property type="entry name" value="arcA"/>
    <property type="match status" value="1"/>
</dbReference>
<dbReference type="NCBIfam" id="NF002381">
    <property type="entry name" value="PRK01388.1"/>
    <property type="match status" value="1"/>
</dbReference>
<dbReference type="PANTHER" id="PTHR47271">
    <property type="entry name" value="ARGININE DEIMINASE"/>
    <property type="match status" value="1"/>
</dbReference>
<dbReference type="PANTHER" id="PTHR47271:SF2">
    <property type="entry name" value="ARGININE DEIMINASE"/>
    <property type="match status" value="1"/>
</dbReference>
<dbReference type="Pfam" id="PF02274">
    <property type="entry name" value="ADI"/>
    <property type="match status" value="1"/>
</dbReference>
<dbReference type="PIRSF" id="PIRSF006356">
    <property type="entry name" value="Arg_deiminase"/>
    <property type="match status" value="1"/>
</dbReference>
<dbReference type="PRINTS" id="PR01466">
    <property type="entry name" value="ARGDEIMINASE"/>
</dbReference>
<dbReference type="SUPFAM" id="SSF55909">
    <property type="entry name" value="Pentein"/>
    <property type="match status" value="1"/>
</dbReference>
<protein>
    <recommendedName>
        <fullName evidence="1">Arginine deiminase</fullName>
        <shortName evidence="1">ADI</shortName>
        <ecNumber evidence="1">3.5.3.6</ecNumber>
    </recommendedName>
    <alternativeName>
        <fullName evidence="1">Arginine dihydrolase</fullName>
        <shortName evidence="1">AD</shortName>
    </alternativeName>
</protein>